<comment type="function">
    <text evidence="2">Involved in spore formation. Plays an essential role in the establishment of homologous chromosome pairing in early meiosis.</text>
</comment>
<comment type="subunit">
    <text evidence="3">Interacts with CRC1.</text>
</comment>
<comment type="subcellular location">
    <subcellularLocation>
        <location evidence="2">Nucleus</location>
    </subcellularLocation>
</comment>
<comment type="tissue specificity">
    <text evidence="2">Expressed in reproductive organs, but not in vegetative organs.</text>
</comment>
<comment type="developmental stage">
    <text evidence="2">Expressed in early stages of flower development. Highest expression is observed when the panicle growth reaches 30 millimeters.</text>
</comment>
<comment type="sequence caution" evidence="4">
    <conflict type="erroneous gene model prediction">
        <sequence resource="EMBL-CDS" id="AAN60485"/>
    </conflict>
</comment>
<feature type="chain" id="PRO_0000058181" description="Protein PAIR1">
    <location>
        <begin position="1"/>
        <end position="492"/>
    </location>
</feature>
<feature type="coiled-coil region" evidence="1">
    <location>
        <begin position="166"/>
        <end position="186"/>
    </location>
</feature>
<feature type="short sequence motif" description="Nuclear localization signal" evidence="1">
    <location>
        <begin position="479"/>
        <end position="483"/>
    </location>
</feature>
<gene>
    <name type="primary">PAIR1</name>
    <name type="ordered locus">Os03g0106300</name>
    <name type="ordered locus">LOC_Os03g01590</name>
    <name type="ORF">OSJNBa0009C08.13</name>
</gene>
<accession>Q75RY2</accession>
<accession>Q10SZ9</accession>
<accession>Q8H7T8</accession>
<keyword id="KW-0175">Coiled coil</keyword>
<keyword id="KW-0469">Meiosis</keyword>
<keyword id="KW-0539">Nucleus</keyword>
<keyword id="KW-1185">Reference proteome</keyword>
<sequence>MKLKMNKACDIASISVLPPRRTGGSSGASASGSVAVAVASQPRSQPLSQSQQSFSQGASASLLHSQSQFSQVSLDDNLLTLLPSPTRDQRFGLHDDSSKRMSSLPASSASCAREESQLQLAKLPSNPVHRWNPSIADTRSGQVTNEDVERKFQHLASSVHKMGMVVDSVQSDVMQLNRAMKEASLDSGSIRQKIAVLESSLQQILKGQDDLKALFGSSTKHNPDQTSVLNSLGSKLNEISSTLATLQTQMQARQLQGDQTTVLNSNASKSNEISSTLATLQTQMQADIRQLRCDVFRVFTKEMEGVVRAIRSVNSRPAAMQMMADQSYQVPVSNGWTQINQTPVAAGRSPMNRAPVAAGRSRMNQLPETKVLSAHLVYPAKVTDLKPKVEQGKVKAAPQKPFASSYYRVAPKQEEVAIRKVNIQVPAKKAPVSIIIESDDDSEGRASCVILKTETGSKEWKVTKQGTEEGLEILRRARKRRRREMQSIVLAS</sequence>
<reference key="1">
    <citation type="journal article" date="2004" name="Plant Cell">
        <title>The novel gene HOMOLOGOUS PAIRING ABERRATION IN RICE MEIOSIS1 of rice encodes a putative coiled-coil protein required for homologous chromosome pairing in meiosis.</title>
        <authorList>
            <person name="Nonomura K."/>
            <person name="Nakano M."/>
            <person name="Fukuda T."/>
            <person name="Eiguchi M."/>
            <person name="Miyao A."/>
            <person name="Hirochika H."/>
            <person name="Kurata N."/>
        </authorList>
    </citation>
    <scope>NUCLEOTIDE SEQUENCE [MRNA]</scope>
    <scope>FUNCTION</scope>
    <scope>SUBCELLULAR LOCATION</scope>
    <scope>TISSUE SPECIFICITY</scope>
    <scope>DEVELOPMENTAL STAGE</scope>
    <source>
        <strain>cv. Nipponbare</strain>
    </source>
</reference>
<reference key="2">
    <citation type="journal article" date="2005" name="Genome Res.">
        <title>Sequence, annotation, and analysis of synteny between rice chromosome 3 and diverged grass species.</title>
        <authorList>
            <consortium name="The rice chromosome 3 sequencing consortium"/>
            <person name="Buell C.R."/>
            <person name="Yuan Q."/>
            <person name="Ouyang S."/>
            <person name="Liu J."/>
            <person name="Zhu W."/>
            <person name="Wang A."/>
            <person name="Maiti R."/>
            <person name="Haas B."/>
            <person name="Wortman J."/>
            <person name="Pertea M."/>
            <person name="Jones K.M."/>
            <person name="Kim M."/>
            <person name="Overton L."/>
            <person name="Tsitrin T."/>
            <person name="Fadrosh D."/>
            <person name="Bera J."/>
            <person name="Weaver B."/>
            <person name="Jin S."/>
            <person name="Johri S."/>
            <person name="Reardon M."/>
            <person name="Webb K."/>
            <person name="Hill J."/>
            <person name="Moffat K."/>
            <person name="Tallon L."/>
            <person name="Van Aken S."/>
            <person name="Lewis M."/>
            <person name="Utterback T."/>
            <person name="Feldblyum T."/>
            <person name="Zismann V."/>
            <person name="Iobst S."/>
            <person name="Hsiao J."/>
            <person name="de Vazeille A.R."/>
            <person name="Salzberg S.L."/>
            <person name="White O."/>
            <person name="Fraser C.M."/>
            <person name="Yu Y."/>
            <person name="Kim H."/>
            <person name="Rambo T."/>
            <person name="Currie J."/>
            <person name="Collura K."/>
            <person name="Kernodle-Thompson S."/>
            <person name="Wei F."/>
            <person name="Kudrna K."/>
            <person name="Ammiraju J.S.S."/>
            <person name="Luo M."/>
            <person name="Goicoechea J.L."/>
            <person name="Wing R.A."/>
            <person name="Henry D."/>
            <person name="Oates R."/>
            <person name="Palmer M."/>
            <person name="Pries G."/>
            <person name="Saski C."/>
            <person name="Simmons J."/>
            <person name="Soderlund C."/>
            <person name="Nelson W."/>
            <person name="de la Bastide M."/>
            <person name="Spiegel L."/>
            <person name="Nascimento L."/>
            <person name="Huang E."/>
            <person name="Preston R."/>
            <person name="Zutavern T."/>
            <person name="Palmer L."/>
            <person name="O'Shaughnessy A."/>
            <person name="Dike S."/>
            <person name="McCombie W.R."/>
            <person name="Minx P."/>
            <person name="Cordum H."/>
            <person name="Wilson R."/>
            <person name="Jin W."/>
            <person name="Lee H.R."/>
            <person name="Jiang J."/>
            <person name="Jackson S."/>
        </authorList>
    </citation>
    <scope>NUCLEOTIDE SEQUENCE [LARGE SCALE GENOMIC DNA]</scope>
    <source>
        <strain>cv. Nipponbare</strain>
    </source>
</reference>
<reference key="3">
    <citation type="journal article" date="2005" name="Nature">
        <title>The map-based sequence of the rice genome.</title>
        <authorList>
            <consortium name="International rice genome sequencing project (IRGSP)"/>
        </authorList>
    </citation>
    <scope>NUCLEOTIDE SEQUENCE [LARGE SCALE GENOMIC DNA]</scope>
    <source>
        <strain>cv. Nipponbare</strain>
    </source>
</reference>
<reference key="4">
    <citation type="journal article" date="2008" name="Nucleic Acids Res.">
        <title>The rice annotation project database (RAP-DB): 2008 update.</title>
        <authorList>
            <consortium name="The rice annotation project (RAP)"/>
        </authorList>
    </citation>
    <scope>GENOME REANNOTATION</scope>
    <source>
        <strain>cv. Nipponbare</strain>
    </source>
</reference>
<reference key="5">
    <citation type="journal article" date="2013" name="Rice">
        <title>Improvement of the Oryza sativa Nipponbare reference genome using next generation sequence and optical map data.</title>
        <authorList>
            <person name="Kawahara Y."/>
            <person name="de la Bastide M."/>
            <person name="Hamilton J.P."/>
            <person name="Kanamori H."/>
            <person name="McCombie W.R."/>
            <person name="Ouyang S."/>
            <person name="Schwartz D.C."/>
            <person name="Tanaka T."/>
            <person name="Wu J."/>
            <person name="Zhou S."/>
            <person name="Childs K.L."/>
            <person name="Davidson R.M."/>
            <person name="Lin H."/>
            <person name="Quesada-Ocampo L."/>
            <person name="Vaillancourt B."/>
            <person name="Sakai H."/>
            <person name="Lee S.S."/>
            <person name="Kim J."/>
            <person name="Numa H."/>
            <person name="Itoh T."/>
            <person name="Buell C.R."/>
            <person name="Matsumoto T."/>
        </authorList>
    </citation>
    <scope>GENOME REANNOTATION</scope>
    <source>
        <strain>cv. Nipponbare</strain>
    </source>
</reference>
<reference key="6">
    <citation type="journal article" date="2013" name="Plant Cell">
        <title>Central region component1, a novel synaptonemal complex component, is essential for meiotic recombination initiation in rice.</title>
        <authorList>
            <person name="Miao C."/>
            <person name="Tang D."/>
            <person name="Zhang H."/>
            <person name="Wang M."/>
            <person name="Li Y."/>
            <person name="Tang S."/>
            <person name="Yu H."/>
            <person name="Gu M."/>
            <person name="Cheng Z."/>
        </authorList>
    </citation>
    <scope>INTERACTION WITH CRC1</scope>
</reference>
<organism>
    <name type="scientific">Oryza sativa subsp. japonica</name>
    <name type="common">Rice</name>
    <dbReference type="NCBI Taxonomy" id="39947"/>
    <lineage>
        <taxon>Eukaryota</taxon>
        <taxon>Viridiplantae</taxon>
        <taxon>Streptophyta</taxon>
        <taxon>Embryophyta</taxon>
        <taxon>Tracheophyta</taxon>
        <taxon>Spermatophyta</taxon>
        <taxon>Magnoliopsida</taxon>
        <taxon>Liliopsida</taxon>
        <taxon>Poales</taxon>
        <taxon>Poaceae</taxon>
        <taxon>BOP clade</taxon>
        <taxon>Oryzoideae</taxon>
        <taxon>Oryzeae</taxon>
        <taxon>Oryzinae</taxon>
        <taxon>Oryza</taxon>
        <taxon>Oryza sativa</taxon>
    </lineage>
</organism>
<evidence type="ECO:0000255" key="1"/>
<evidence type="ECO:0000269" key="2">
    <source>
    </source>
</evidence>
<evidence type="ECO:0000269" key="3">
    <source>
    </source>
</evidence>
<evidence type="ECO:0000305" key="4"/>
<dbReference type="EMBL" id="AB158462">
    <property type="protein sequence ID" value="BAD15032.1"/>
    <property type="molecule type" value="mRNA"/>
</dbReference>
<dbReference type="EMBL" id="AC107224">
    <property type="protein sequence ID" value="AAN60485.1"/>
    <property type="status" value="ALT_SEQ"/>
    <property type="molecule type" value="Genomic_DNA"/>
</dbReference>
<dbReference type="EMBL" id="DP000009">
    <property type="protein sequence ID" value="ABF93533.1"/>
    <property type="molecule type" value="Genomic_DNA"/>
</dbReference>
<dbReference type="EMBL" id="AP008209">
    <property type="protein sequence ID" value="BAF10598.1"/>
    <property type="molecule type" value="Genomic_DNA"/>
</dbReference>
<dbReference type="EMBL" id="AP014959">
    <property type="protein sequence ID" value="BAS81870.1"/>
    <property type="molecule type" value="Genomic_DNA"/>
</dbReference>
<dbReference type="RefSeq" id="XP_015632198.1">
    <property type="nucleotide sequence ID" value="XM_015776712.1"/>
</dbReference>
<dbReference type="SMR" id="Q75RY2"/>
<dbReference type="FunCoup" id="Q75RY2">
    <property type="interactions" value="1489"/>
</dbReference>
<dbReference type="STRING" id="39947.Q75RY2"/>
<dbReference type="PaxDb" id="39947-Q75RY2"/>
<dbReference type="EnsemblPlants" id="Os03t0106300-01">
    <property type="protein sequence ID" value="Os03t0106300-01"/>
    <property type="gene ID" value="Os03g0106300"/>
</dbReference>
<dbReference type="Gramene" id="Os03t0106300-01">
    <property type="protein sequence ID" value="Os03t0106300-01"/>
    <property type="gene ID" value="Os03g0106300"/>
</dbReference>
<dbReference type="KEGG" id="dosa:Os03g0106300"/>
<dbReference type="eggNOG" id="ENOG502QT68">
    <property type="taxonomic scope" value="Eukaryota"/>
</dbReference>
<dbReference type="HOGENOM" id="CLU_030530_1_0_1"/>
<dbReference type="InParanoid" id="Q75RY2"/>
<dbReference type="OMA" id="PMHRWNP"/>
<dbReference type="OrthoDB" id="673411at2759"/>
<dbReference type="Proteomes" id="UP000000763">
    <property type="component" value="Chromosome 3"/>
</dbReference>
<dbReference type="Proteomes" id="UP000059680">
    <property type="component" value="Chromosome 3"/>
</dbReference>
<dbReference type="GO" id="GO:0005634">
    <property type="term" value="C:nucleus"/>
    <property type="evidence" value="ECO:0000314"/>
    <property type="project" value="Gramene"/>
</dbReference>
<dbReference type="GO" id="GO:0070192">
    <property type="term" value="P:chromosome organization involved in meiotic cell cycle"/>
    <property type="evidence" value="ECO:0007669"/>
    <property type="project" value="InterPro"/>
</dbReference>
<dbReference type="GO" id="GO:0009553">
    <property type="term" value="P:embryo sac development"/>
    <property type="evidence" value="ECO:0000318"/>
    <property type="project" value="GO_Central"/>
</dbReference>
<dbReference type="GO" id="GO:0009554">
    <property type="term" value="P:megasporogenesis"/>
    <property type="evidence" value="ECO:0000314"/>
    <property type="project" value="Gramene"/>
</dbReference>
<dbReference type="GO" id="GO:0042138">
    <property type="term" value="P:meiotic DNA double-strand break formation"/>
    <property type="evidence" value="ECO:0000318"/>
    <property type="project" value="GO_Central"/>
</dbReference>
<dbReference type="GO" id="GO:0009556">
    <property type="term" value="P:microsporogenesis"/>
    <property type="evidence" value="ECO:0000314"/>
    <property type="project" value="Gramene"/>
</dbReference>
<dbReference type="InterPro" id="IPR034546">
    <property type="entry name" value="PAIR1"/>
</dbReference>
<dbReference type="PANTHER" id="PTHR37695">
    <property type="entry name" value="RECOMBINATION INITIATION DEFECTS 3-RELATED"/>
    <property type="match status" value="1"/>
</dbReference>
<dbReference type="PANTHER" id="PTHR37695:SF1">
    <property type="entry name" value="RECOMBINATION INITIATION DEFECTS 3-RELATED"/>
    <property type="match status" value="1"/>
</dbReference>
<protein>
    <recommendedName>
        <fullName>Protein PAIR1</fullName>
    </recommendedName>
    <alternativeName>
        <fullName>Protein HOMOLOGOUS PAIRING ABERRATION IN RICE MEIOSIS 1</fullName>
    </alternativeName>
</protein>
<proteinExistence type="evidence at protein level"/>
<name>PAIR1_ORYSJ</name>